<keyword id="KW-0002">3D-structure</keyword>
<keyword id="KW-0903">Direct protein sequencing</keyword>
<keyword id="KW-0520">NAD</keyword>
<keyword id="KW-0560">Oxidoreductase</keyword>
<keyword id="KW-0816">Tricarboxylic acid cycle</keyword>
<feature type="chain" id="PRO_0000113400" description="Malate dehydrogenase">
    <location>
        <begin position="1"/>
        <end position="327"/>
    </location>
</feature>
<feature type="active site" description="Proton acceptor" evidence="1">
    <location>
        <position position="187"/>
    </location>
</feature>
<feature type="binding site" evidence="1 2 3">
    <location>
        <begin position="11"/>
        <end position="17"/>
    </location>
    <ligand>
        <name>NAD(+)</name>
        <dbReference type="ChEBI" id="CHEBI:57540"/>
    </ligand>
</feature>
<feature type="binding site" evidence="1">
    <location>
        <position position="92"/>
    </location>
    <ligand>
        <name>substrate</name>
    </ligand>
</feature>
<feature type="binding site" evidence="1">
    <location>
        <position position="98"/>
    </location>
    <ligand>
        <name>substrate</name>
    </ligand>
</feature>
<feature type="binding site" evidence="1">
    <location>
        <position position="105"/>
    </location>
    <ligand>
        <name>NAD(+)</name>
        <dbReference type="ChEBI" id="CHEBI:57540"/>
    </ligand>
</feature>
<feature type="binding site" evidence="1 2">
    <location>
        <position position="112"/>
    </location>
    <ligand>
        <name>NAD(+)</name>
        <dbReference type="ChEBI" id="CHEBI:57540"/>
    </ligand>
</feature>
<feature type="binding site" evidence="1 2 3">
    <location>
        <begin position="129"/>
        <end position="131"/>
    </location>
    <ligand>
        <name>NAD(+)</name>
        <dbReference type="ChEBI" id="CHEBI:57540"/>
    </ligand>
</feature>
<feature type="binding site" evidence="1">
    <location>
        <position position="131"/>
    </location>
    <ligand>
        <name>substrate</name>
    </ligand>
</feature>
<feature type="binding site" evidence="1">
    <location>
        <position position="162"/>
    </location>
    <ligand>
        <name>substrate</name>
    </ligand>
</feature>
<feature type="sequence variant" description="In strain: F428; produces a 2 to 3 times higher enzyme activity.">
    <original>T</original>
    <variation>I</variation>
    <location>
        <position position="190"/>
    </location>
</feature>
<feature type="strand" evidence="5">
    <location>
        <begin position="5"/>
        <end position="11"/>
    </location>
</feature>
<feature type="helix" evidence="5">
    <location>
        <begin position="15"/>
        <end position="25"/>
    </location>
</feature>
<feature type="turn" evidence="5">
    <location>
        <begin position="26"/>
        <end position="30"/>
    </location>
</feature>
<feature type="strand" evidence="5">
    <location>
        <begin position="36"/>
        <end position="41"/>
    </location>
</feature>
<feature type="helix" evidence="5">
    <location>
        <begin position="44"/>
        <end position="46"/>
    </location>
</feature>
<feature type="helix" evidence="5">
    <location>
        <begin position="47"/>
        <end position="58"/>
    </location>
</feature>
<feature type="turn" evidence="5">
    <location>
        <begin position="59"/>
        <end position="61"/>
    </location>
</feature>
<feature type="strand" evidence="5">
    <location>
        <begin position="65"/>
        <end position="72"/>
    </location>
</feature>
<feature type="helix" evidence="5">
    <location>
        <begin position="74"/>
        <end position="77"/>
    </location>
</feature>
<feature type="turn" evidence="5">
    <location>
        <begin position="78"/>
        <end position="80"/>
    </location>
</feature>
<feature type="strand" evidence="5">
    <location>
        <begin position="82"/>
        <end position="86"/>
    </location>
</feature>
<feature type="helix" evidence="5">
    <location>
        <begin position="98"/>
        <end position="119"/>
    </location>
</feature>
<feature type="strand" evidence="5">
    <location>
        <begin position="125"/>
        <end position="128"/>
    </location>
</feature>
<feature type="strand" evidence="5">
    <location>
        <begin position="130"/>
        <end position="132"/>
    </location>
</feature>
<feature type="helix" evidence="5">
    <location>
        <begin position="133"/>
        <end position="142"/>
    </location>
</feature>
<feature type="helix" evidence="5">
    <location>
        <begin position="149"/>
        <end position="151"/>
    </location>
</feature>
<feature type="strand" evidence="5">
    <location>
        <begin position="152"/>
        <end position="154"/>
    </location>
</feature>
<feature type="helix" evidence="5">
    <location>
        <begin position="157"/>
        <end position="171"/>
    </location>
</feature>
<feature type="helix" evidence="5">
    <location>
        <begin position="175"/>
        <end position="177"/>
    </location>
</feature>
<feature type="strand" evidence="5">
    <location>
        <begin position="182"/>
        <end position="185"/>
    </location>
</feature>
<feature type="strand" evidence="5">
    <location>
        <begin position="192"/>
        <end position="194"/>
    </location>
</feature>
<feature type="helix" evidence="5">
    <location>
        <begin position="205"/>
        <end position="207"/>
    </location>
</feature>
<feature type="helix" evidence="5">
    <location>
        <begin position="211"/>
        <end position="216"/>
    </location>
</feature>
<feature type="helix" evidence="5">
    <location>
        <begin position="218"/>
        <end position="233"/>
    </location>
</feature>
<feature type="helix" evidence="5">
    <location>
        <begin position="238"/>
        <end position="253"/>
    </location>
</feature>
<feature type="strand" evidence="5">
    <location>
        <begin position="262"/>
        <end position="267"/>
    </location>
</feature>
<feature type="helix" evidence="5">
    <location>
        <begin position="271"/>
        <end position="273"/>
    </location>
</feature>
<feature type="strand" evidence="5">
    <location>
        <begin position="278"/>
        <end position="287"/>
    </location>
</feature>
<feature type="strand" evidence="5">
    <location>
        <begin position="290"/>
        <end position="293"/>
    </location>
</feature>
<feature type="helix" evidence="5">
    <location>
        <begin position="301"/>
        <end position="323"/>
    </location>
</feature>
<accession>P10584</accession>
<evidence type="ECO:0000255" key="1">
    <source>
        <dbReference type="HAMAP-Rule" id="MF_01517"/>
    </source>
</evidence>
<evidence type="ECO:0000269" key="2">
    <source>
    </source>
</evidence>
<evidence type="ECO:0000269" key="3">
    <source>
    </source>
</evidence>
<evidence type="ECO:0000305" key="4"/>
<evidence type="ECO:0007829" key="5">
    <source>
        <dbReference type="PDB" id="1Y7T"/>
    </source>
</evidence>
<comment type="function">
    <text evidence="1">Catalyzes the reversible oxidation of malate to oxaloacetate.</text>
</comment>
<comment type="catalytic activity">
    <reaction evidence="1">
        <text>(S)-malate + NAD(+) = oxaloacetate + NADH + H(+)</text>
        <dbReference type="Rhea" id="RHEA:21432"/>
        <dbReference type="ChEBI" id="CHEBI:15378"/>
        <dbReference type="ChEBI" id="CHEBI:15589"/>
        <dbReference type="ChEBI" id="CHEBI:16452"/>
        <dbReference type="ChEBI" id="CHEBI:57540"/>
        <dbReference type="ChEBI" id="CHEBI:57945"/>
        <dbReference type="EC" id="1.1.1.37"/>
    </reaction>
</comment>
<comment type="subunit">
    <text evidence="2">Homodimer.</text>
</comment>
<comment type="similarity">
    <text evidence="1 4">Belongs to the LDH/MDH superfamily. MDH type 2 family.</text>
</comment>
<name>MDH_THETH</name>
<sequence>MKAPVRVAVTGAAGQIGYSLLFRIAAGEMLGKDQPVILQLLEIPQAMKALEGVVMELEDCAFPLLAGLEATDDPKVAFKDADYALLVGAAPRKAGMERRDLLQVNGKIFTEQGRALAEVAKKDVKVLVVGNPANTNALIAYKNAPGLNPRNFTAMTRLDHNRAKAQLAKKTGTGVDRIRRMTVWGNHSSTMFPDLFHAEVDGRPALELVDMEWYEKVFIPTVAQRGAAIIQARGASSAASAANAAIEHIRDWALGTPEGDWVSMAVPSQGEYGIPEGIVYSFPVTAKDGAYRVVEGLEINEFARKRMEITAQELLDEMEQVKALGLI</sequence>
<gene>
    <name evidence="1" type="primary">mdh</name>
</gene>
<protein>
    <recommendedName>
        <fullName evidence="1">Malate dehydrogenase</fullName>
        <ecNumber evidence="1">1.1.1.37</ecNumber>
    </recommendedName>
</protein>
<reference key="1">
    <citation type="journal article" date="1986" name="J. Biol. Chem.">
        <title>Nucleotide sequence of the malate dehydrogenase gene of Thermus flavus and its mutation directing an increase in enzyme activity.</title>
        <authorList>
            <person name="Nishiyama M."/>
            <person name="Matsubara N."/>
            <person name="Yamamoto K."/>
            <person name="Iijima S."/>
            <person name="Uozumi T."/>
            <person name="Beppu T."/>
        </authorList>
    </citation>
    <scope>NUCLEOTIDE SEQUENCE [GENOMIC DNA]</scope>
    <scope>PROTEIN SEQUENCE OF 1-37 AND 265-284</scope>
    <source>
        <strain>ATCC 33923 / DSM 674 / AT-62</strain>
    </source>
</reference>
<reference key="2">
    <citation type="journal article" date="1991" name="Mol. Gen. Genet.">
        <title>Characterization of an operon encoding succinyl-CoA synthetase and malate dehydrogenase from Thermus flavus AT-62 and its expression in Escherichia coli.</title>
        <authorList>
            <person name="Nishiyama M."/>
            <person name="Horinouchi S."/>
            <person name="Beppu T."/>
        </authorList>
    </citation>
    <scope>NUCLEOTIDE SEQUENCE [GENOMIC DNA]</scope>
    <source>
        <strain>ATCC 33923 / DSM 674 / AT-62</strain>
    </source>
</reference>
<reference key="3">
    <citation type="journal article" date="1990" name="FEMS Microbiol. Lett.">
        <title>Cloning and nucleotide sequences of the mdh and sucD genes from Thermus aquaticus B.</title>
        <authorList>
            <person name="Nicholls D.J."/>
            <person name="Sundaram T.K."/>
            <person name="Atkinson T."/>
            <person name="Minton N.P."/>
        </authorList>
    </citation>
    <scope>NUCLEOTIDE SEQUENCE [GENOMIC DNA]</scope>
    <source>
        <strain>B / NCIMB 11247</strain>
    </source>
</reference>
<reference key="4">
    <citation type="journal article" date="1993" name="Biochemistry">
        <title>Determinants of protein thermostability observed in the 1.9-A crystal structure of malate dehydrogenase from the thermophilic bacterium Thermus flavus.</title>
        <authorList>
            <person name="Kelly C.A."/>
            <person name="Nishiyama M."/>
            <person name="Ohnishi Y."/>
            <person name="Beppu T."/>
            <person name="Birktoft J.J."/>
        </authorList>
    </citation>
    <scope>X-RAY CRYSTALLOGRAPHY (1.9 ANGSTROMS) IN COMPLEX WITH NAD</scope>
    <source>
        <strain>ATCC 33923 / DSM 674 / AT-62</strain>
    </source>
</reference>
<reference key="5">
    <citation type="journal article" date="2005" name="Biochem. Biophys. Res. Commun.">
        <title>Crystal structure of NAD-dependent malate dehydrogenase complexed with NADP(H).</title>
        <authorList>
            <person name="Tomita T."/>
            <person name="Fushinobu S."/>
            <person name="Kuzuyama T."/>
            <person name="Nishiyama M."/>
        </authorList>
    </citation>
    <scope>X-RAY CRYSTALLOGRAPHY (1.65 ANGSTROMS) IN COMPLEX WITH NADP</scope>
</reference>
<reference key="6">
    <citation type="submission" date="2002-10" db="PDB data bank">
        <title>Crystal structure of malate dehydrogenase from Thermus thermophilus HB8.</title>
        <authorList>
            <consortium name="RIKEN structural genomics initiative (RSGI)"/>
        </authorList>
    </citation>
    <scope>X-RAY CRYSTALLOGRAPHY (2.0 ANGSTROMS)</scope>
</reference>
<dbReference type="EC" id="1.1.1.37" evidence="1"/>
<dbReference type="EMBL" id="J02598">
    <property type="protein sequence ID" value="AAA27499.1"/>
    <property type="molecule type" value="Genomic_DNA"/>
</dbReference>
<dbReference type="EMBL" id="X54073">
    <property type="protein sequence ID" value="CAA38008.1"/>
    <property type="molecule type" value="Genomic_DNA"/>
</dbReference>
<dbReference type="EMBL" id="X56033">
    <property type="protein sequence ID" value="CAA39508.1"/>
    <property type="molecule type" value="Genomic_DNA"/>
</dbReference>
<dbReference type="RefSeq" id="WP_011172623.1">
    <property type="nucleotide sequence ID" value="NZ_LR027517.1"/>
</dbReference>
<dbReference type="PDB" id="1BDM">
    <property type="method" value="X-ray"/>
    <property type="resolution" value="1.80 A"/>
    <property type="chains" value="A/B=1-327"/>
</dbReference>
<dbReference type="PDB" id="1BMD">
    <property type="method" value="X-ray"/>
    <property type="resolution" value="1.90 A"/>
    <property type="chains" value="A/B=1-327"/>
</dbReference>
<dbReference type="PDB" id="1IZ9">
    <property type="method" value="X-ray"/>
    <property type="resolution" value="2.00 A"/>
    <property type="chains" value="A/B=1-327"/>
</dbReference>
<dbReference type="PDB" id="1WZE">
    <property type="method" value="X-ray"/>
    <property type="resolution" value="2.00 A"/>
    <property type="chains" value="A/B=1-327"/>
</dbReference>
<dbReference type="PDB" id="1WZI">
    <property type="method" value="X-ray"/>
    <property type="resolution" value="2.00 A"/>
    <property type="chains" value="A/B=1-327"/>
</dbReference>
<dbReference type="PDB" id="1Y7T">
    <property type="method" value="X-ray"/>
    <property type="resolution" value="1.65 A"/>
    <property type="chains" value="A/B=1-327"/>
</dbReference>
<dbReference type="PDB" id="2CVQ">
    <property type="method" value="X-ray"/>
    <property type="resolution" value="2.08 A"/>
    <property type="chains" value="A/B=1-327"/>
</dbReference>
<dbReference type="PDB" id="4KDE">
    <property type="method" value="X-ray"/>
    <property type="resolution" value="1.80 A"/>
    <property type="chains" value="A/B=1-327"/>
</dbReference>
<dbReference type="PDB" id="4KDF">
    <property type="method" value="X-ray"/>
    <property type="resolution" value="2.36 A"/>
    <property type="chains" value="A/B/C/D=1-327"/>
</dbReference>
<dbReference type="PDBsum" id="1BDM"/>
<dbReference type="PDBsum" id="1BMD"/>
<dbReference type="PDBsum" id="1IZ9"/>
<dbReference type="PDBsum" id="1WZE"/>
<dbReference type="PDBsum" id="1WZI"/>
<dbReference type="PDBsum" id="1Y7T"/>
<dbReference type="PDBsum" id="2CVQ"/>
<dbReference type="PDBsum" id="4KDE"/>
<dbReference type="PDBsum" id="4KDF"/>
<dbReference type="SMR" id="P10584"/>
<dbReference type="BindingDB" id="P10584"/>
<dbReference type="ChEMBL" id="CHEMBL4255"/>
<dbReference type="DrugCentral" id="P10584"/>
<dbReference type="OMA" id="HTWVNGT"/>
<dbReference type="BRENDA" id="1.1.1.37">
    <property type="organism ID" value="2305"/>
</dbReference>
<dbReference type="SABIO-RK" id="P10584"/>
<dbReference type="EvolutionaryTrace" id="P10584"/>
<dbReference type="GO" id="GO:0030060">
    <property type="term" value="F:L-malate dehydrogenase (NAD+) activity"/>
    <property type="evidence" value="ECO:0007669"/>
    <property type="project" value="UniProtKB-UniRule"/>
</dbReference>
<dbReference type="GO" id="GO:0006108">
    <property type="term" value="P:malate metabolic process"/>
    <property type="evidence" value="ECO:0007669"/>
    <property type="project" value="InterPro"/>
</dbReference>
<dbReference type="GO" id="GO:0006099">
    <property type="term" value="P:tricarboxylic acid cycle"/>
    <property type="evidence" value="ECO:0007669"/>
    <property type="project" value="UniProtKB-UniRule"/>
</dbReference>
<dbReference type="CDD" id="cd01338">
    <property type="entry name" value="MDH_chloroplast-like"/>
    <property type="match status" value="1"/>
</dbReference>
<dbReference type="FunFam" id="3.40.50.720:FF:000010">
    <property type="entry name" value="Malate dehydrogenase"/>
    <property type="match status" value="1"/>
</dbReference>
<dbReference type="FunFam" id="3.90.110.10:FF:000002">
    <property type="entry name" value="Malate dehydrogenase"/>
    <property type="match status" value="1"/>
</dbReference>
<dbReference type="Gene3D" id="3.90.110.10">
    <property type="entry name" value="Lactate dehydrogenase/glycoside hydrolase, family 4, C-terminal"/>
    <property type="match status" value="1"/>
</dbReference>
<dbReference type="Gene3D" id="3.40.50.720">
    <property type="entry name" value="NAD(P)-binding Rossmann-like Domain"/>
    <property type="match status" value="1"/>
</dbReference>
<dbReference type="HAMAP" id="MF_01517">
    <property type="entry name" value="Malate_dehydrog_2"/>
    <property type="match status" value="1"/>
</dbReference>
<dbReference type="InterPro" id="IPR001557">
    <property type="entry name" value="L-lactate/malate_DH"/>
</dbReference>
<dbReference type="InterPro" id="IPR022383">
    <property type="entry name" value="Lactate/malate_DH_C"/>
</dbReference>
<dbReference type="InterPro" id="IPR001236">
    <property type="entry name" value="Lactate/malate_DH_N"/>
</dbReference>
<dbReference type="InterPro" id="IPR015955">
    <property type="entry name" value="Lactate_DH/Glyco_Ohase_4_C"/>
</dbReference>
<dbReference type="InterPro" id="IPR001252">
    <property type="entry name" value="Malate_DH_AS"/>
</dbReference>
<dbReference type="InterPro" id="IPR010945">
    <property type="entry name" value="Malate_DH_type2"/>
</dbReference>
<dbReference type="InterPro" id="IPR036291">
    <property type="entry name" value="NAD(P)-bd_dom_sf"/>
</dbReference>
<dbReference type="NCBIfam" id="TIGR01759">
    <property type="entry name" value="MalateDH-SF1"/>
    <property type="match status" value="1"/>
</dbReference>
<dbReference type="NCBIfam" id="NF003916">
    <property type="entry name" value="PRK05442.1"/>
    <property type="match status" value="1"/>
</dbReference>
<dbReference type="PANTHER" id="PTHR23382">
    <property type="entry name" value="MALATE DEHYDROGENASE"/>
    <property type="match status" value="1"/>
</dbReference>
<dbReference type="Pfam" id="PF02866">
    <property type="entry name" value="Ldh_1_C"/>
    <property type="match status" value="1"/>
</dbReference>
<dbReference type="Pfam" id="PF00056">
    <property type="entry name" value="Ldh_1_N"/>
    <property type="match status" value="1"/>
</dbReference>
<dbReference type="PIRSF" id="PIRSF000102">
    <property type="entry name" value="Lac_mal_DH"/>
    <property type="match status" value="1"/>
</dbReference>
<dbReference type="SUPFAM" id="SSF56327">
    <property type="entry name" value="LDH C-terminal domain-like"/>
    <property type="match status" value="1"/>
</dbReference>
<dbReference type="SUPFAM" id="SSF51735">
    <property type="entry name" value="NAD(P)-binding Rossmann-fold domains"/>
    <property type="match status" value="1"/>
</dbReference>
<dbReference type="PROSITE" id="PS00068">
    <property type="entry name" value="MDH"/>
    <property type="match status" value="1"/>
</dbReference>
<organism>
    <name type="scientific">Thermus thermophilus</name>
    <dbReference type="NCBI Taxonomy" id="274"/>
    <lineage>
        <taxon>Bacteria</taxon>
        <taxon>Thermotogati</taxon>
        <taxon>Deinococcota</taxon>
        <taxon>Deinococci</taxon>
        <taxon>Thermales</taxon>
        <taxon>Thermaceae</taxon>
        <taxon>Thermus</taxon>
    </lineage>
</organism>
<proteinExistence type="evidence at protein level"/>